<dbReference type="EC" id="2.3.1.-" evidence="1"/>
<dbReference type="EMBL" id="RDQH01000328">
    <property type="protein sequence ID" value="RXI05632.1"/>
    <property type="status" value="ALT_SEQ"/>
    <property type="molecule type" value="Genomic_DNA"/>
</dbReference>
<dbReference type="EMBL" id="KC291134">
    <property type="status" value="NOT_ANNOTATED_CDS"/>
    <property type="molecule type" value="Genomic_DNA"/>
</dbReference>
<dbReference type="SMR" id="A0A498KJ69"/>
<dbReference type="STRING" id="3750.A0A498KJ69"/>
<dbReference type="Proteomes" id="UP000290289">
    <property type="component" value="Chromosome 2"/>
</dbReference>
<dbReference type="GO" id="GO:0016746">
    <property type="term" value="F:acyltransferase activity"/>
    <property type="evidence" value="ECO:0000250"/>
    <property type="project" value="UniProtKB"/>
</dbReference>
<dbReference type="GO" id="GO:0006066">
    <property type="term" value="P:alcohol metabolic process"/>
    <property type="evidence" value="ECO:0000250"/>
    <property type="project" value="UniProtKB"/>
</dbReference>
<dbReference type="GO" id="GO:0009836">
    <property type="term" value="P:fruit ripening, climacteric"/>
    <property type="evidence" value="ECO:0000270"/>
    <property type="project" value="UniProtKB"/>
</dbReference>
<dbReference type="Gene3D" id="3.30.559.10">
    <property type="entry name" value="Chloramphenicol acetyltransferase-like domain"/>
    <property type="match status" value="2"/>
</dbReference>
<dbReference type="InterPro" id="IPR023213">
    <property type="entry name" value="CAT-like_dom_sf"/>
</dbReference>
<dbReference type="InterPro" id="IPR050898">
    <property type="entry name" value="Plant_acyltransferase"/>
</dbReference>
<dbReference type="PANTHER" id="PTHR31147">
    <property type="entry name" value="ACYL TRANSFERASE 4"/>
    <property type="match status" value="1"/>
</dbReference>
<dbReference type="PANTHER" id="PTHR31147:SF66">
    <property type="entry name" value="OS05G0315700 PROTEIN"/>
    <property type="match status" value="1"/>
</dbReference>
<dbReference type="Pfam" id="PF02458">
    <property type="entry name" value="Transferase"/>
    <property type="match status" value="1"/>
</dbReference>
<gene>
    <name evidence="4" type="primary">AAT1-GSC</name>
    <name evidence="7" type="ORF">DVH24_017674</name>
</gene>
<protein>
    <recommendedName>
        <fullName evidence="4">Alcohol acyl transferase 1 allele GSc</fullName>
        <shortName evidence="4">AAT1-GSc</shortName>
        <ecNumber evidence="1">2.3.1.-</ecNumber>
    </recommendedName>
</protein>
<proteinExistence type="evidence at transcript level"/>
<keyword id="KW-1185">Reference proteome</keyword>
<keyword id="KW-0808">Transferase</keyword>
<reference key="1">
    <citation type="journal article" date="2019" name="Nat. Commun.">
        <title>A high-quality apple genome assembly reveals the association of a retrotransposon and red fruit colour.</title>
        <authorList>
            <person name="Zhang L."/>
            <person name="Hu J."/>
            <person name="Han X."/>
            <person name="Li J."/>
            <person name="Gao Y."/>
            <person name="Richards C.M."/>
            <person name="Zhang C."/>
            <person name="Tian Y."/>
            <person name="Liu G."/>
            <person name="Gul H."/>
            <person name="Wang D."/>
            <person name="Tian Y."/>
            <person name="Yang C."/>
            <person name="Meng M."/>
            <person name="Yuan G."/>
            <person name="Kang G."/>
            <person name="Wu Y."/>
            <person name="Wang K."/>
            <person name="Zhang H."/>
            <person name="Wang D."/>
            <person name="Cong P."/>
        </authorList>
    </citation>
    <scope>NUCLEOTIDE SEQUENCE [LARGE SCALE GENOMIC DNA]</scope>
    <source>
        <strain>cv. HFTH1</strain>
        <tissue>Leaf</tissue>
    </source>
</reference>
<reference key="2">
    <citation type="journal article" date="2014" name="Plant J.">
        <title>The AAT1 locus is critical for the biosynthesis of esters contributing to 'ripe apple' flavour in 'Royal Gala' and 'Granny Smith' apples.</title>
        <authorList>
            <person name="Souleyre E.J.F."/>
            <person name="Chagne D."/>
            <person name="Chen X."/>
            <person name="Tomes S."/>
            <person name="Turner R.M."/>
            <person name="Wang M.Y."/>
            <person name="Maddumage R."/>
            <person name="Hunt M.B."/>
            <person name="Winz R.A."/>
            <person name="Wiedow C."/>
            <person name="Hamiaux C."/>
            <person name="Gardiner S.E."/>
            <person name="Rowan D.D."/>
            <person name="Atkinson R.G."/>
        </authorList>
    </citation>
    <scope>NUCLEOTIDE SEQUENCE [GENOMIC DNA]</scope>
    <scope>TISSUE SPECIFICITY</scope>
    <scope>DEVELOPMENTAL STAGE</scope>
    <scope>GENE FAMILY</scope>
    <scope>NOMENCLATURE</scope>
    <source>
        <strain>cv. Granny Smith</strain>
    </source>
</reference>
<sequence length="456" mass="50907">MMPLAVLQVKRLQPKLITPAKLTPQETKFLSDIDDQEFLRFQVPIIMCYKDNPSLNKNLNPVKVIREALSRALVYYYPLARRLREGPNRKLMVDCNGEGILFIEASADVTLEQLGDKMLPPCPLLEEFLFNFPGSGGIIGCPLVLVQMMTCLTCGGFILALRLNHTMCDAAGLLLFLTAIAEMARGAHAPSILPVWERELLFAPDPPRITCAHHEYEDVIGHSDGSYASSNQSNMVQRSFYFGAKEMRVLRKQIPPHLTSTCSTFDLITACLWKYRTLALNINPKEAVRVSCIVNARGKHNNVRLPLGYYGNAFAFPAAISKAEPLCKNPLGYALELVKKAKATMNEEYLRSVADLLVLRGRPQYSSTGSYLIVSDNTRAGFGDVNFGWGQPVFAGPAKALDLISFYVQHKNNTEDGILVPMCLPSSAMERFQQELERITREPKEDICNNLRSTSQ</sequence>
<comment type="function">
    <text evidence="1">Involved in the biosynthesis of volatile esters which confer ripe apple fruit flavor (By similarity). Alcohol acyl transferase that can use a wide range of alcohols as substrate to produce esters (By similarity).</text>
</comment>
<comment type="tissue specificity">
    <text evidence="3">Expressed at very low levels in the skin of ripe fruit.</text>
</comment>
<comment type="developmental stage">
    <text evidence="3">Accumulates progressively at very low levels during fruit development, and fades out in ripe fruit.</text>
</comment>
<comment type="miscellaneous">
    <text evidence="6">The fruit of cv. Royal Gala exhibits a high ester accumulation, whereas the cv. Granny Smith contains low ester levels; this influences strongly the ripe apple fruit aroma.</text>
</comment>
<comment type="similarity">
    <text evidence="5">Belongs to the plant acyltransferase family.</text>
</comment>
<comment type="sequence caution" evidence="5">
    <conflict type="erroneous gene model prediction">
        <sequence resource="EMBL-CDS" id="RXI05632"/>
    </conflict>
</comment>
<name>ATGSC_MALDO</name>
<feature type="chain" id="PRO_0000451713" description="Alcohol acyl transferase 1 allele GSc">
    <location>
        <begin position="1"/>
        <end position="456"/>
    </location>
</feature>
<feature type="active site" description="Proton acceptor" evidence="2">
    <location>
        <position position="165"/>
    </location>
</feature>
<feature type="active site" description="Proton acceptor" evidence="2">
    <location>
        <position position="386"/>
    </location>
</feature>
<evidence type="ECO:0000250" key="1">
    <source>
        <dbReference type="UniProtKB" id="Q64FJ6"/>
    </source>
</evidence>
<evidence type="ECO:0000250" key="2">
    <source>
        <dbReference type="UniProtKB" id="Q9FI78"/>
    </source>
</evidence>
<evidence type="ECO:0000269" key="3">
    <source>
    </source>
</evidence>
<evidence type="ECO:0000303" key="4">
    <source>
    </source>
</evidence>
<evidence type="ECO:0000305" key="5"/>
<evidence type="ECO:0000305" key="6">
    <source>
    </source>
</evidence>
<evidence type="ECO:0000312" key="7">
    <source>
        <dbReference type="EMBL" id="RXI05632.1"/>
    </source>
</evidence>
<organism>
    <name type="scientific">Malus domestica</name>
    <name type="common">Apple</name>
    <name type="synonym">Pyrus malus</name>
    <dbReference type="NCBI Taxonomy" id="3750"/>
    <lineage>
        <taxon>Eukaryota</taxon>
        <taxon>Viridiplantae</taxon>
        <taxon>Streptophyta</taxon>
        <taxon>Embryophyta</taxon>
        <taxon>Tracheophyta</taxon>
        <taxon>Spermatophyta</taxon>
        <taxon>Magnoliopsida</taxon>
        <taxon>eudicotyledons</taxon>
        <taxon>Gunneridae</taxon>
        <taxon>Pentapetalae</taxon>
        <taxon>rosids</taxon>
        <taxon>fabids</taxon>
        <taxon>Rosales</taxon>
        <taxon>Rosaceae</taxon>
        <taxon>Amygdaloideae</taxon>
        <taxon>Maleae</taxon>
        <taxon>Malus</taxon>
    </lineage>
</organism>
<accession>A0A498KJ69</accession>